<dbReference type="EC" id="2.7.10.2"/>
<dbReference type="EMBL" id="U00936">
    <property type="protein sequence ID" value="AAC27350.1"/>
    <property type="molecule type" value="mRNA"/>
</dbReference>
<dbReference type="RefSeq" id="NP_001296681.1">
    <property type="nucleotide sequence ID" value="NM_001309752.1"/>
</dbReference>
<dbReference type="SMR" id="P53356"/>
<dbReference type="EnsemblMetazoa" id="NM_001309752.1">
    <property type="protein sequence ID" value="NP_001296681.1"/>
    <property type="gene ID" value="LOC100200602"/>
</dbReference>
<dbReference type="GeneID" id="100200602"/>
<dbReference type="KEGG" id="hmg:100200602"/>
<dbReference type="OrthoDB" id="67310at2759"/>
<dbReference type="BRENDA" id="2.7.10.2">
    <property type="organism ID" value="2720"/>
</dbReference>
<dbReference type="Proteomes" id="UP000694840">
    <property type="component" value="Unplaced"/>
</dbReference>
<dbReference type="GO" id="GO:0005524">
    <property type="term" value="F:ATP binding"/>
    <property type="evidence" value="ECO:0007669"/>
    <property type="project" value="UniProtKB-KW"/>
</dbReference>
<dbReference type="GO" id="GO:0004715">
    <property type="term" value="F:non-membrane spanning protein tyrosine kinase activity"/>
    <property type="evidence" value="ECO:0007669"/>
    <property type="project" value="UniProtKB-EC"/>
</dbReference>
<dbReference type="CDD" id="cd05060">
    <property type="entry name" value="PTKc_Syk_like"/>
    <property type="match status" value="1"/>
</dbReference>
<dbReference type="CDD" id="cd10348">
    <property type="entry name" value="SH2_Cterm_shark_like"/>
    <property type="match status" value="1"/>
</dbReference>
<dbReference type="CDD" id="cd10347">
    <property type="entry name" value="SH2_Nterm_shark_like"/>
    <property type="match status" value="1"/>
</dbReference>
<dbReference type="FunFam" id="1.10.510.10:FF:000521">
    <property type="entry name" value="Tyrosine-protein kinase pr2"/>
    <property type="match status" value="1"/>
</dbReference>
<dbReference type="Gene3D" id="1.25.40.20">
    <property type="entry name" value="Ankyrin repeat-containing domain"/>
    <property type="match status" value="1"/>
</dbReference>
<dbReference type="Gene3D" id="3.30.200.20">
    <property type="entry name" value="Phosphorylase Kinase, domain 1"/>
    <property type="match status" value="1"/>
</dbReference>
<dbReference type="Gene3D" id="3.30.505.10">
    <property type="entry name" value="SH2 domain"/>
    <property type="match status" value="2"/>
</dbReference>
<dbReference type="Gene3D" id="1.10.510.10">
    <property type="entry name" value="Transferase(Phosphotransferase) domain 1"/>
    <property type="match status" value="1"/>
</dbReference>
<dbReference type="InterPro" id="IPR002110">
    <property type="entry name" value="Ankyrin_rpt"/>
</dbReference>
<dbReference type="InterPro" id="IPR036770">
    <property type="entry name" value="Ankyrin_rpt-contain_sf"/>
</dbReference>
<dbReference type="InterPro" id="IPR011009">
    <property type="entry name" value="Kinase-like_dom_sf"/>
</dbReference>
<dbReference type="InterPro" id="IPR050198">
    <property type="entry name" value="Non-receptor_tyrosine_kinases"/>
</dbReference>
<dbReference type="InterPro" id="IPR000719">
    <property type="entry name" value="Prot_kinase_dom"/>
</dbReference>
<dbReference type="InterPro" id="IPR017441">
    <property type="entry name" value="Protein_kinase_ATP_BS"/>
</dbReference>
<dbReference type="InterPro" id="IPR001245">
    <property type="entry name" value="Ser-Thr/Tyr_kinase_cat_dom"/>
</dbReference>
<dbReference type="InterPro" id="IPR000980">
    <property type="entry name" value="SH2"/>
</dbReference>
<dbReference type="InterPro" id="IPR036860">
    <property type="entry name" value="SH2_dom_sf"/>
</dbReference>
<dbReference type="InterPro" id="IPR035061">
    <property type="entry name" value="Shark-like_SH2_N"/>
</dbReference>
<dbReference type="InterPro" id="IPR008266">
    <property type="entry name" value="Tyr_kinase_AS"/>
</dbReference>
<dbReference type="InterPro" id="IPR020635">
    <property type="entry name" value="Tyr_kinase_cat_dom"/>
</dbReference>
<dbReference type="PANTHER" id="PTHR24418">
    <property type="entry name" value="TYROSINE-PROTEIN KINASE"/>
    <property type="match status" value="1"/>
</dbReference>
<dbReference type="Pfam" id="PF12796">
    <property type="entry name" value="Ank_2"/>
    <property type="match status" value="1"/>
</dbReference>
<dbReference type="Pfam" id="PF13637">
    <property type="entry name" value="Ank_4"/>
    <property type="match status" value="1"/>
</dbReference>
<dbReference type="Pfam" id="PF07714">
    <property type="entry name" value="PK_Tyr_Ser-Thr"/>
    <property type="match status" value="1"/>
</dbReference>
<dbReference type="Pfam" id="PF00017">
    <property type="entry name" value="SH2"/>
    <property type="match status" value="2"/>
</dbReference>
<dbReference type="PRINTS" id="PR00109">
    <property type="entry name" value="TYRKINASE"/>
</dbReference>
<dbReference type="SMART" id="SM00248">
    <property type="entry name" value="ANK"/>
    <property type="match status" value="5"/>
</dbReference>
<dbReference type="SMART" id="SM00252">
    <property type="entry name" value="SH2"/>
    <property type="match status" value="2"/>
</dbReference>
<dbReference type="SMART" id="SM00219">
    <property type="entry name" value="TyrKc"/>
    <property type="match status" value="1"/>
</dbReference>
<dbReference type="SUPFAM" id="SSF48403">
    <property type="entry name" value="Ankyrin repeat"/>
    <property type="match status" value="1"/>
</dbReference>
<dbReference type="SUPFAM" id="SSF56112">
    <property type="entry name" value="Protein kinase-like (PK-like)"/>
    <property type="match status" value="1"/>
</dbReference>
<dbReference type="SUPFAM" id="SSF55550">
    <property type="entry name" value="SH2 domain"/>
    <property type="match status" value="2"/>
</dbReference>
<dbReference type="PROSITE" id="PS50297">
    <property type="entry name" value="ANK_REP_REGION"/>
    <property type="match status" value="1"/>
</dbReference>
<dbReference type="PROSITE" id="PS50088">
    <property type="entry name" value="ANK_REPEAT"/>
    <property type="match status" value="2"/>
</dbReference>
<dbReference type="PROSITE" id="PS00107">
    <property type="entry name" value="PROTEIN_KINASE_ATP"/>
    <property type="match status" value="1"/>
</dbReference>
<dbReference type="PROSITE" id="PS50011">
    <property type="entry name" value="PROTEIN_KINASE_DOM"/>
    <property type="match status" value="1"/>
</dbReference>
<dbReference type="PROSITE" id="PS00109">
    <property type="entry name" value="PROTEIN_KINASE_TYR"/>
    <property type="match status" value="1"/>
</dbReference>
<dbReference type="PROSITE" id="PS50001">
    <property type="entry name" value="SH2"/>
    <property type="match status" value="2"/>
</dbReference>
<proteinExistence type="evidence at transcript level"/>
<sequence>MSKNSDALLWYHGKITREVAVQVLLRKGGRDGFFLIRDCGNAPEDYVLSMMFRSQILHFQINCLGDNKFSIDNGPIFQGLDMLISYYKVISDGLPCKLVDFCVGKIAPLYALKYGLDTRLHLACEEKNPNTVKELLQDSVIKENVNARSISGLTALHISCSNGDNDIVAMLLNAGADASAIDANGRTPVQVVCFYNHASTLHLLISKGSADFLKRSPNNGWVPLHEAAMRGSLECVKVLLSFNASMYPRSLDGDTPRDLALQYENYNVVEFFDNYPVNQPKTSITQWLHQNLDRNGALIILQNASMADGSFLIRSSIKCHGYYVLTLVYEKKTYHFQIKSRADRWFYIDDGPLFETLPHLVDHYMQYADGLPTLLQFPVPSAENRKRPLPPTPTKNQLKLPVPPSRPIKNNNGLPQPLPYPEFTNESDSDIFTRLECEKEKPLPKLPRPVVNHTEVPNSVNVGQKGDQTMKNNAQQNIILKESISFGKELGVGEFGSVIKGIWLSPGGKEINVAMKTLHKDKMVQGEKEFLREALVMSQLNHPCIVSLLGVCLGPPMILVQELVEMGALLDYLMDYQPEIQEVDLKLWASQIAFGMMYLELKRFVHRDLAARNILLANKKQVKISDFGLSRAVGTGSDYYQAKQGGRWPVRWYAPESINYGTFSTKSDVWSYGITLWEMFTFGDLPYGEMTGNEVVSFLEHCGRLEKPDECPIHTYSIMLSCWHIDPNKRPTFNELHSTFSTDPEYEDVRIYRDRIK</sequence>
<protein>
    <recommendedName>
        <fullName>Tyrosine-protein kinase HTK16</fullName>
        <ecNumber>2.7.10.2</ecNumber>
    </recommendedName>
</protein>
<evidence type="ECO:0000255" key="1"/>
<evidence type="ECO:0000255" key="2">
    <source>
        <dbReference type="PROSITE-ProRule" id="PRU00159"/>
    </source>
</evidence>
<evidence type="ECO:0000255" key="3">
    <source>
        <dbReference type="PROSITE-ProRule" id="PRU00191"/>
    </source>
</evidence>
<evidence type="ECO:0000255" key="4">
    <source>
        <dbReference type="PROSITE-ProRule" id="PRU10028"/>
    </source>
</evidence>
<evidence type="ECO:0000256" key="5">
    <source>
        <dbReference type="SAM" id="MobiDB-lite"/>
    </source>
</evidence>
<gene>
    <name type="primary">HTK16</name>
</gene>
<organism>
    <name type="scientific">Hydra vulgaris</name>
    <name type="common">Hydra</name>
    <name type="synonym">Hydra attenuata</name>
    <dbReference type="NCBI Taxonomy" id="6087"/>
    <lineage>
        <taxon>Eukaryota</taxon>
        <taxon>Metazoa</taxon>
        <taxon>Cnidaria</taxon>
        <taxon>Hydrozoa</taxon>
        <taxon>Hydroidolina</taxon>
        <taxon>Anthoathecata</taxon>
        <taxon>Aplanulata</taxon>
        <taxon>Hydridae</taxon>
        <taxon>Hydra</taxon>
    </lineage>
</organism>
<comment type="function">
    <text>May be involved in signal transduction.</text>
</comment>
<comment type="catalytic activity">
    <reaction evidence="4">
        <text>L-tyrosyl-[protein] + ATP = O-phospho-L-tyrosyl-[protein] + ADP + H(+)</text>
        <dbReference type="Rhea" id="RHEA:10596"/>
        <dbReference type="Rhea" id="RHEA-COMP:10136"/>
        <dbReference type="Rhea" id="RHEA-COMP:20101"/>
        <dbReference type="ChEBI" id="CHEBI:15378"/>
        <dbReference type="ChEBI" id="CHEBI:30616"/>
        <dbReference type="ChEBI" id="CHEBI:46858"/>
        <dbReference type="ChEBI" id="CHEBI:61978"/>
        <dbReference type="ChEBI" id="CHEBI:456216"/>
        <dbReference type="EC" id="2.7.10.2"/>
    </reaction>
</comment>
<comment type="tissue specificity">
    <text>Epithelial cells.</text>
</comment>
<comment type="similarity">
    <text evidence="2">Belongs to the protein kinase superfamily. Tyr protein kinase family.</text>
</comment>
<keyword id="KW-0040">ANK repeat</keyword>
<keyword id="KW-0067">ATP-binding</keyword>
<keyword id="KW-0418">Kinase</keyword>
<keyword id="KW-0547">Nucleotide-binding</keyword>
<keyword id="KW-0597">Phosphoprotein</keyword>
<keyword id="KW-1185">Reference proteome</keyword>
<keyword id="KW-0677">Repeat</keyword>
<keyword id="KW-0727">SH2 domain</keyword>
<keyword id="KW-0808">Transferase</keyword>
<keyword id="KW-0829">Tyrosine-protein kinase</keyword>
<reference key="1">
    <citation type="journal article" date="1994" name="Oncogene">
        <title>Identification of a gene encoding a novel protein-tyrosine kinase containing SH2 domains and ankyrin-like repeats.</title>
        <authorList>
            <person name="Chan T.A."/>
            <person name="Chu C.A."/>
            <person name="Rauen K.A."/>
            <person name="Kroiher M."/>
            <person name="Tatarewicz S.M."/>
            <person name="Steele R.E."/>
        </authorList>
    </citation>
    <scope>NUCLEOTIDE SEQUENCE [MRNA]</scope>
    <source>
        <strain>Irvine</strain>
    </source>
</reference>
<accession>P53356</accession>
<name>HTK16_HYDVU</name>
<feature type="chain" id="PRO_0000088105" description="Tyrosine-protein kinase HTK16">
    <location>
        <begin position="1"/>
        <end position="757"/>
    </location>
</feature>
<feature type="domain" description="SH2 1" evidence="3">
    <location>
        <begin position="10"/>
        <end position="102"/>
    </location>
</feature>
<feature type="repeat" description="ANK 1">
    <location>
        <begin position="115"/>
        <end position="147"/>
    </location>
</feature>
<feature type="repeat" description="ANK 2">
    <location>
        <begin position="151"/>
        <end position="180"/>
    </location>
</feature>
<feature type="repeat" description="ANK 3">
    <location>
        <begin position="184"/>
        <end position="214"/>
    </location>
</feature>
<feature type="repeat" description="ANK 4">
    <location>
        <begin position="219"/>
        <end position="248"/>
    </location>
</feature>
<feature type="repeat" description="ANK 5">
    <location>
        <begin position="252"/>
        <end position="281"/>
    </location>
</feature>
<feature type="domain" description="SH2 2" evidence="3">
    <location>
        <begin position="287"/>
        <end position="379"/>
    </location>
</feature>
<feature type="domain" description="Protein kinase" evidence="2">
    <location>
        <begin position="484"/>
        <end position="740"/>
    </location>
</feature>
<feature type="region of interest" description="Disordered" evidence="5">
    <location>
        <begin position="381"/>
        <end position="407"/>
    </location>
</feature>
<feature type="region of interest" description="Disordered" evidence="5">
    <location>
        <begin position="444"/>
        <end position="467"/>
    </location>
</feature>
<feature type="compositionally biased region" description="Polar residues" evidence="5">
    <location>
        <begin position="455"/>
        <end position="467"/>
    </location>
</feature>
<feature type="active site" description="Proton acceptor" evidence="2 4">
    <location>
        <position position="608"/>
    </location>
</feature>
<feature type="binding site" evidence="2">
    <location>
        <begin position="490"/>
        <end position="498"/>
    </location>
    <ligand>
        <name>ATP</name>
        <dbReference type="ChEBI" id="CHEBI:30616"/>
    </ligand>
</feature>
<feature type="binding site" evidence="2">
    <location>
        <position position="516"/>
    </location>
    <ligand>
        <name>ATP</name>
        <dbReference type="ChEBI" id="CHEBI:30616"/>
    </ligand>
</feature>
<feature type="modified residue" description="Phosphotyrosine" evidence="1">
    <location>
        <position position="746"/>
    </location>
</feature>